<name>SYK_CENSM</name>
<evidence type="ECO:0000250" key="1"/>
<evidence type="ECO:0000305" key="2"/>
<gene>
    <name type="primary">lysS</name>
</gene>
<protein>
    <recommendedName>
        <fullName>Lysine--tRNA ligase</fullName>
        <ecNumber>6.1.1.6</ecNumber>
    </recommendedName>
    <alternativeName>
        <fullName>Lysyl-tRNA synthetase</fullName>
        <shortName>LysRS</shortName>
    </alternativeName>
</protein>
<organism>
    <name type="scientific">Cenarchaeum symbiosum</name>
    <dbReference type="NCBI Taxonomy" id="46770"/>
    <lineage>
        <taxon>Archaea</taxon>
        <taxon>Nitrososphaerota</taxon>
        <taxon>Candidatus Cenarchaeales</taxon>
        <taxon>Candidatus Cenarchaeaceae</taxon>
        <taxon>Candidatus Cenarchaeum</taxon>
    </lineage>
</organism>
<keyword id="KW-0030">Aminoacyl-tRNA synthetase</keyword>
<keyword id="KW-0067">ATP-binding</keyword>
<keyword id="KW-0963">Cytoplasm</keyword>
<keyword id="KW-0436">Ligase</keyword>
<keyword id="KW-0547">Nucleotide-binding</keyword>
<keyword id="KW-0648">Protein biosynthesis</keyword>
<accession>P0CW89</accession>
<accession>A0RWR7</accession>
<accession>O74059</accession>
<dbReference type="EC" id="6.1.1.6"/>
<dbReference type="EMBL" id="AF083072">
    <property type="protein sequence ID" value="AAC62702.1"/>
    <property type="molecule type" value="Genomic_DNA"/>
</dbReference>
<dbReference type="PIR" id="T31311">
    <property type="entry name" value="T31311"/>
</dbReference>
<dbReference type="SMR" id="P0CW89"/>
<dbReference type="GO" id="GO:0005737">
    <property type="term" value="C:cytoplasm"/>
    <property type="evidence" value="ECO:0007669"/>
    <property type="project" value="UniProtKB-SubCell"/>
</dbReference>
<dbReference type="GO" id="GO:0005524">
    <property type="term" value="F:ATP binding"/>
    <property type="evidence" value="ECO:0007669"/>
    <property type="project" value="UniProtKB-UniRule"/>
</dbReference>
<dbReference type="GO" id="GO:0004824">
    <property type="term" value="F:lysine-tRNA ligase activity"/>
    <property type="evidence" value="ECO:0007669"/>
    <property type="project" value="UniProtKB-UniRule"/>
</dbReference>
<dbReference type="GO" id="GO:0000049">
    <property type="term" value="F:tRNA binding"/>
    <property type="evidence" value="ECO:0007669"/>
    <property type="project" value="InterPro"/>
</dbReference>
<dbReference type="GO" id="GO:0006430">
    <property type="term" value="P:lysyl-tRNA aminoacylation"/>
    <property type="evidence" value="ECO:0007669"/>
    <property type="project" value="UniProtKB-UniRule"/>
</dbReference>
<dbReference type="Gene3D" id="1.10.10.350">
    <property type="match status" value="1"/>
</dbReference>
<dbReference type="Gene3D" id="1.10.10.770">
    <property type="match status" value="1"/>
</dbReference>
<dbReference type="Gene3D" id="3.40.50.620">
    <property type="entry name" value="HUPs"/>
    <property type="match status" value="2"/>
</dbReference>
<dbReference type="HAMAP" id="MF_00177">
    <property type="entry name" value="Lys_tRNA_synth_class1"/>
    <property type="match status" value="1"/>
</dbReference>
<dbReference type="InterPro" id="IPR020751">
    <property type="entry name" value="aa-tRNA-synth_I_codon-bd_sub2"/>
</dbReference>
<dbReference type="InterPro" id="IPR008925">
    <property type="entry name" value="aa_tRNA-synth_I_cd-bd_sf"/>
</dbReference>
<dbReference type="InterPro" id="IPR002904">
    <property type="entry name" value="Lys-tRNA-ligase"/>
</dbReference>
<dbReference type="InterPro" id="IPR014729">
    <property type="entry name" value="Rossmann-like_a/b/a_fold"/>
</dbReference>
<dbReference type="NCBIfam" id="TIGR00467">
    <property type="entry name" value="lysS_arch"/>
    <property type="match status" value="1"/>
</dbReference>
<dbReference type="PANTHER" id="PTHR37940">
    <property type="entry name" value="LYSINE--TRNA LIGASE"/>
    <property type="match status" value="1"/>
</dbReference>
<dbReference type="PANTHER" id="PTHR37940:SF1">
    <property type="entry name" value="LYSINE--TRNA LIGASE"/>
    <property type="match status" value="1"/>
</dbReference>
<dbReference type="Pfam" id="PF01921">
    <property type="entry name" value="tRNA-synt_1f"/>
    <property type="match status" value="1"/>
</dbReference>
<dbReference type="SUPFAM" id="SSF48163">
    <property type="entry name" value="An anticodon-binding domain of class I aminoacyl-tRNA synthetases"/>
    <property type="match status" value="1"/>
</dbReference>
<dbReference type="SUPFAM" id="SSF52374">
    <property type="entry name" value="Nucleotidylyl transferase"/>
    <property type="match status" value="1"/>
</dbReference>
<comment type="catalytic activity">
    <reaction>
        <text>tRNA(Lys) + L-lysine + ATP = L-lysyl-tRNA(Lys) + AMP + diphosphate</text>
        <dbReference type="Rhea" id="RHEA:20792"/>
        <dbReference type="Rhea" id="RHEA-COMP:9696"/>
        <dbReference type="Rhea" id="RHEA-COMP:9697"/>
        <dbReference type="ChEBI" id="CHEBI:30616"/>
        <dbReference type="ChEBI" id="CHEBI:32551"/>
        <dbReference type="ChEBI" id="CHEBI:33019"/>
        <dbReference type="ChEBI" id="CHEBI:78442"/>
        <dbReference type="ChEBI" id="CHEBI:78529"/>
        <dbReference type="ChEBI" id="CHEBI:456215"/>
        <dbReference type="EC" id="6.1.1.6"/>
    </reaction>
</comment>
<comment type="subcellular location">
    <subcellularLocation>
        <location evidence="1">Cytoplasm</location>
    </subcellularLocation>
</comment>
<comment type="similarity">
    <text evidence="2">Belongs to the class-I aminoacyl-tRNA synthetase family.</text>
</comment>
<proteinExistence type="inferred from homology"/>
<feature type="chain" id="PRO_0000409229" description="Lysine--tRNA ligase">
    <location>
        <begin position="1"/>
        <end position="524"/>
    </location>
</feature>
<feature type="short sequence motif" description="'HIGH' region">
    <location>
        <begin position="39"/>
        <end position="47"/>
    </location>
</feature>
<feature type="short sequence motif" description="'KMSKS' region">
    <location>
        <begin position="294"/>
        <end position="298"/>
    </location>
</feature>
<feature type="binding site" evidence="1">
    <location>
        <position position="297"/>
    </location>
    <ligand>
        <name>ATP</name>
        <dbReference type="ChEBI" id="CHEBI:30616"/>
    </ligand>
</feature>
<sequence length="524" mass="57799">METIGRGTWIDKLAHELVEREEALGRDTEMINVESGLGASGIPHMGSLGDAVRAYGVGLAVGDMGHSFRLIAYFDDLDGLRKVPEGMPSSLEEHIARPVSAIPDPYGCHDSYGMHMSGLLLEGLDALGIEYDFRRARDTYRDGLLAEQIHRILSNSSVIGEKIAEMVGQEKFRSSLPYFAVCEQCGKMYTAESVEYLADSRKVRYRCGDAEVGGRKIAGCGHEGEADTGGAGGKLAWKVEFAARWQAFDVRFEAYGKDIMDSVRINDWVSDEILSSPHPHHTRYEMFLDKGGKKISKSSGNVVTPQKWLRYGTPQSILLLMYKRITGARELGLEDVPSLMDEYGDLQREYFAGGGRGGKAREAKNRGLFEYTNLLEAQEGPRPHAGYRLLVELSRLFRENRTERVTKKLVEYGVIDGPSPGIERLIALAGNYADDMYSAERTEVELDGATRGALSELAEMLGSAPEGGLQDVIYGVAKSHGVPPRDFFKALYRIILDASSGPRIGPFIEDIGREKVAGMIRGRL</sequence>
<reference key="1">
    <citation type="journal article" date="1998" name="J. Bacteriol.">
        <title>Genomic analysis reveals chromosomal variation in natural populations of the uncultured psychrophilic archaeon Cenarchaeum symbiosum.</title>
        <authorList>
            <person name="Schleper C."/>
            <person name="Delong E.F."/>
            <person name="Preston C.M."/>
            <person name="Feldman R.A."/>
            <person name="Wu K.-Y."/>
            <person name="Swanson R.V."/>
        </authorList>
    </citation>
    <scope>NUCLEOTIDE SEQUENCE [GENOMIC DNA]</scope>
    <source>
        <strain>B</strain>
    </source>
</reference>